<feature type="chain" id="PRO_0000358723" description="Transcription factor MYC3">
    <location>
        <begin position="1"/>
        <end position="592"/>
    </location>
</feature>
<feature type="domain" description="bHLH" evidence="1">
    <location>
        <begin position="411"/>
        <end position="460"/>
    </location>
</feature>
<feature type="region of interest" description="JAZ-interaction domain">
    <location>
        <begin position="82"/>
        <end position="141"/>
    </location>
</feature>
<feature type="region of interest" description="Disordered" evidence="2">
    <location>
        <begin position="261"/>
        <end position="313"/>
    </location>
</feature>
<feature type="region of interest" description="Disordered" evidence="2">
    <location>
        <begin position="341"/>
        <end position="361"/>
    </location>
</feature>
<feature type="region of interest" description="Disordered" evidence="2">
    <location>
        <begin position="393"/>
        <end position="422"/>
    </location>
</feature>
<feature type="region of interest" description="Disordered" evidence="2">
    <location>
        <begin position="465"/>
        <end position="508"/>
    </location>
</feature>
<feature type="compositionally biased region" description="Low complexity" evidence="2">
    <location>
        <begin position="278"/>
        <end position="293"/>
    </location>
</feature>
<feature type="compositionally biased region" description="Basic and acidic residues" evidence="2">
    <location>
        <begin position="294"/>
        <end position="306"/>
    </location>
</feature>
<feature type="compositionally biased region" description="Polar residues" evidence="2">
    <location>
        <begin position="352"/>
        <end position="361"/>
    </location>
</feature>
<feature type="compositionally biased region" description="Basic residues" evidence="2">
    <location>
        <begin position="398"/>
        <end position="407"/>
    </location>
</feature>
<feature type="compositionally biased region" description="Basic and acidic residues" evidence="2">
    <location>
        <begin position="408"/>
        <end position="422"/>
    </location>
</feature>
<feature type="compositionally biased region" description="Basic and acidic residues" evidence="2">
    <location>
        <begin position="468"/>
        <end position="482"/>
    </location>
</feature>
<feature type="mutagenesis site" description="Exhibits an atr2D-like phenotype; dominant resistance to 5-methyl-tryptophan (5MT), a toxic tryptophan analog." evidence="3">
    <original>D</original>
    <variation>A</variation>
    <variation>Q</variation>
    <variation>S</variation>
    <location>
        <position position="94"/>
    </location>
</feature>
<feature type="mutagenesis site" description="No effect, normal sensitivity to 5MT." evidence="3">
    <original>D</original>
    <variation>E</variation>
    <location>
        <position position="94"/>
    </location>
</feature>
<feature type="mutagenesis site" description="In atr2D; dominant resistance to 5MT." evidence="3">
    <original>D</original>
    <variation>N</variation>
    <location>
        <position position="94"/>
    </location>
</feature>
<feature type="sequence conflict" description="In Ref. 1; AAL55712." evidence="10" ref="1">
    <original>N</original>
    <variation>D</variation>
    <location>
        <position position="2"/>
    </location>
</feature>
<feature type="helix" evidence="11">
    <location>
        <begin position="8"/>
        <end position="10"/>
    </location>
</feature>
<feature type="strand" evidence="11">
    <location>
        <begin position="11"/>
        <end position="15"/>
    </location>
</feature>
<feature type="helix" evidence="11">
    <location>
        <begin position="17"/>
        <end position="25"/>
    </location>
</feature>
<feature type="helix" evidence="12">
    <location>
        <begin position="49"/>
        <end position="51"/>
    </location>
</feature>
<feature type="helix" evidence="12">
    <location>
        <begin position="52"/>
        <end position="62"/>
    </location>
</feature>
<feature type="strand" evidence="13">
    <location>
        <begin position="63"/>
        <end position="65"/>
    </location>
</feature>
<feature type="strand" evidence="12">
    <location>
        <begin position="69"/>
        <end position="79"/>
    </location>
</feature>
<feature type="turn" evidence="12">
    <location>
        <begin position="81"/>
        <end position="83"/>
    </location>
</feature>
<feature type="strand" evidence="12">
    <location>
        <begin position="86"/>
        <end position="97"/>
    </location>
</feature>
<feature type="helix" evidence="12">
    <location>
        <begin position="112"/>
        <end position="127"/>
    </location>
</feature>
<feature type="helix" evidence="12">
    <location>
        <begin position="146"/>
        <end position="154"/>
    </location>
</feature>
<feature type="strand" evidence="12">
    <location>
        <begin position="158"/>
        <end position="160"/>
    </location>
</feature>
<feature type="helix" evidence="12">
    <location>
        <begin position="164"/>
        <end position="171"/>
    </location>
</feature>
<feature type="strand" evidence="12">
    <location>
        <begin position="175"/>
        <end position="180"/>
    </location>
</feature>
<feature type="helix" evidence="12">
    <location>
        <begin position="181"/>
        <end position="185"/>
    </location>
</feature>
<feature type="helix" evidence="12">
    <location>
        <begin position="190"/>
        <end position="197"/>
    </location>
</feature>
<feature type="strand" evidence="12">
    <location>
        <begin position="202"/>
        <end position="208"/>
    </location>
</feature>
<feature type="strand" evidence="12">
    <location>
        <begin position="211"/>
        <end position="219"/>
    </location>
</feature>
<feature type="helix" evidence="12">
    <location>
        <begin position="225"/>
        <end position="234"/>
    </location>
</feature>
<dbReference type="EMBL" id="AF251690">
    <property type="protein sequence ID" value="AAL55712.1"/>
    <property type="molecule type" value="mRNA"/>
</dbReference>
<dbReference type="EMBL" id="AB016882">
    <property type="protein sequence ID" value="BAB08920.1"/>
    <property type="molecule type" value="Genomic_DNA"/>
</dbReference>
<dbReference type="EMBL" id="CP002688">
    <property type="protein sequence ID" value="AED95422.1"/>
    <property type="molecule type" value="Genomic_DNA"/>
</dbReference>
<dbReference type="RefSeq" id="NP_199488.1">
    <property type="nucleotide sequence ID" value="NM_124046.2"/>
</dbReference>
<dbReference type="PDB" id="4RQW">
    <property type="method" value="X-ray"/>
    <property type="resolution" value="2.20 A"/>
    <property type="chains" value="A/B=44-238"/>
</dbReference>
<dbReference type="PDB" id="4RRU">
    <property type="method" value="X-ray"/>
    <property type="resolution" value="2.10 A"/>
    <property type="chains" value="A=5-242"/>
</dbReference>
<dbReference type="PDB" id="4RS9">
    <property type="method" value="X-ray"/>
    <property type="resolution" value="1.95 A"/>
    <property type="chains" value="A=44-238"/>
</dbReference>
<dbReference type="PDB" id="4YWC">
    <property type="method" value="X-ray"/>
    <property type="resolution" value="2.40 A"/>
    <property type="chains" value="A/B=5-242"/>
</dbReference>
<dbReference type="PDB" id="4YZ6">
    <property type="method" value="X-ray"/>
    <property type="resolution" value="1.95 A"/>
    <property type="chains" value="A=44-238"/>
</dbReference>
<dbReference type="PDB" id="5T0F">
    <property type="method" value="X-ray"/>
    <property type="resolution" value="2.40 A"/>
    <property type="chains" value="A=44-242"/>
</dbReference>
<dbReference type="PDB" id="5T0Q">
    <property type="method" value="X-ray"/>
    <property type="resolution" value="2.15 A"/>
    <property type="chains" value="A=44-242"/>
</dbReference>
<dbReference type="PDB" id="7FDM">
    <property type="method" value="X-ray"/>
    <property type="resolution" value="2.50 A"/>
    <property type="chains" value="A/B=44-238"/>
</dbReference>
<dbReference type="PDB" id="8T2I">
    <property type="method" value="EM"/>
    <property type="resolution" value="10.40 A"/>
    <property type="chains" value="A=49-238"/>
</dbReference>
<dbReference type="PDBsum" id="4RQW"/>
<dbReference type="PDBsum" id="4RRU"/>
<dbReference type="PDBsum" id="4RS9"/>
<dbReference type="PDBsum" id="4YWC"/>
<dbReference type="PDBsum" id="4YZ6"/>
<dbReference type="PDBsum" id="5T0F"/>
<dbReference type="PDBsum" id="5T0Q"/>
<dbReference type="PDBsum" id="7FDM"/>
<dbReference type="PDBsum" id="8T2I"/>
<dbReference type="EMDB" id="EMD-40983"/>
<dbReference type="SMR" id="Q9FIP9"/>
<dbReference type="BioGRID" id="19967">
    <property type="interactions" value="28"/>
</dbReference>
<dbReference type="DIP" id="DIP-58585N"/>
<dbReference type="FunCoup" id="Q9FIP9">
    <property type="interactions" value="49"/>
</dbReference>
<dbReference type="IntAct" id="Q9FIP9">
    <property type="interactions" value="14"/>
</dbReference>
<dbReference type="STRING" id="3702.Q9FIP9"/>
<dbReference type="iPTMnet" id="Q9FIP9"/>
<dbReference type="PaxDb" id="3702-AT5G46760.1"/>
<dbReference type="ProteomicsDB" id="251260"/>
<dbReference type="EnsemblPlants" id="AT5G46760.1">
    <property type="protein sequence ID" value="AT5G46760.1"/>
    <property type="gene ID" value="AT5G46760"/>
</dbReference>
<dbReference type="GeneID" id="834719"/>
<dbReference type="Gramene" id="AT5G46760.1">
    <property type="protein sequence ID" value="AT5G46760.1"/>
    <property type="gene ID" value="AT5G46760"/>
</dbReference>
<dbReference type="KEGG" id="ath:AT5G46760"/>
<dbReference type="Araport" id="AT5G46760"/>
<dbReference type="TAIR" id="AT5G46760">
    <property type="gene designation" value="MYC3"/>
</dbReference>
<dbReference type="eggNOG" id="ENOG502QUFW">
    <property type="taxonomic scope" value="Eukaryota"/>
</dbReference>
<dbReference type="HOGENOM" id="CLU_021132_0_1_1"/>
<dbReference type="InParanoid" id="Q9FIP9"/>
<dbReference type="OMA" id="AFIRTNH"/>
<dbReference type="PhylomeDB" id="Q9FIP9"/>
<dbReference type="EvolutionaryTrace" id="Q9FIP9"/>
<dbReference type="PRO" id="PR:Q9FIP9"/>
<dbReference type="Proteomes" id="UP000006548">
    <property type="component" value="Chromosome 5"/>
</dbReference>
<dbReference type="ExpressionAtlas" id="Q9FIP9">
    <property type="expression patterns" value="baseline and differential"/>
</dbReference>
<dbReference type="GO" id="GO:0005634">
    <property type="term" value="C:nucleus"/>
    <property type="evidence" value="ECO:0000314"/>
    <property type="project" value="TAIR"/>
</dbReference>
<dbReference type="GO" id="GO:0043425">
    <property type="term" value="F:bHLH transcription factor binding"/>
    <property type="evidence" value="ECO:0000353"/>
    <property type="project" value="TAIR"/>
</dbReference>
<dbReference type="GO" id="GO:0003677">
    <property type="term" value="F:DNA binding"/>
    <property type="evidence" value="ECO:0007669"/>
    <property type="project" value="UniProtKB-KW"/>
</dbReference>
<dbReference type="GO" id="GO:0003700">
    <property type="term" value="F:DNA-binding transcription factor activity"/>
    <property type="evidence" value="ECO:0000250"/>
    <property type="project" value="TAIR"/>
</dbReference>
<dbReference type="GO" id="GO:0046983">
    <property type="term" value="F:protein dimerization activity"/>
    <property type="evidence" value="ECO:0007669"/>
    <property type="project" value="InterPro"/>
</dbReference>
<dbReference type="GO" id="GO:0009718">
    <property type="term" value="P:anthocyanin-containing compound biosynthetic process"/>
    <property type="evidence" value="ECO:0000315"/>
    <property type="project" value="TAIR"/>
</dbReference>
<dbReference type="GO" id="GO:0006952">
    <property type="term" value="P:defense response"/>
    <property type="evidence" value="ECO:0000315"/>
    <property type="project" value="TAIR"/>
</dbReference>
<dbReference type="GO" id="GO:0106167">
    <property type="term" value="P:extracellular ATP signaling"/>
    <property type="evidence" value="ECO:0000315"/>
    <property type="project" value="TAIR"/>
</dbReference>
<dbReference type="GO" id="GO:0045893">
    <property type="term" value="P:positive regulation of DNA-templated transcription"/>
    <property type="evidence" value="ECO:0000314"/>
    <property type="project" value="TAIR"/>
</dbReference>
<dbReference type="GO" id="GO:0006355">
    <property type="term" value="P:regulation of DNA-templated transcription"/>
    <property type="evidence" value="ECO:0000304"/>
    <property type="project" value="TAIR"/>
</dbReference>
<dbReference type="GO" id="GO:0009753">
    <property type="term" value="P:response to jasmonic acid"/>
    <property type="evidence" value="ECO:0000315"/>
    <property type="project" value="TAIR"/>
</dbReference>
<dbReference type="GO" id="GO:0010374">
    <property type="term" value="P:stomatal complex development"/>
    <property type="evidence" value="ECO:0000316"/>
    <property type="project" value="TAIR"/>
</dbReference>
<dbReference type="CDD" id="cd11449">
    <property type="entry name" value="bHLH_AtAIB_like"/>
    <property type="match status" value="1"/>
</dbReference>
<dbReference type="FunFam" id="4.10.280.10:FF:000078">
    <property type="entry name" value="Transcription factor bHLH13"/>
    <property type="match status" value="1"/>
</dbReference>
<dbReference type="Gene3D" id="4.10.280.10">
    <property type="entry name" value="Helix-loop-helix DNA-binding domain"/>
    <property type="match status" value="1"/>
</dbReference>
<dbReference type="InterPro" id="IPR045084">
    <property type="entry name" value="AIB/MYC-like"/>
</dbReference>
<dbReference type="InterPro" id="IPR054502">
    <property type="entry name" value="bHLH-TF_ACT-like_plant"/>
</dbReference>
<dbReference type="InterPro" id="IPR011598">
    <property type="entry name" value="bHLH_dom"/>
</dbReference>
<dbReference type="InterPro" id="IPR036638">
    <property type="entry name" value="HLH_DNA-bd_sf"/>
</dbReference>
<dbReference type="InterPro" id="IPR025610">
    <property type="entry name" value="MYC/MYB_N"/>
</dbReference>
<dbReference type="PANTHER" id="PTHR11514">
    <property type="entry name" value="MYC"/>
    <property type="match status" value="1"/>
</dbReference>
<dbReference type="PANTHER" id="PTHR11514:SF141">
    <property type="entry name" value="TRANSCRIPTION FACTOR MYC3"/>
    <property type="match status" value="1"/>
</dbReference>
<dbReference type="Pfam" id="PF14215">
    <property type="entry name" value="bHLH-MYC_N"/>
    <property type="match status" value="1"/>
</dbReference>
<dbReference type="Pfam" id="PF22754">
    <property type="entry name" value="bHLH-TF_ACT-like_plant"/>
    <property type="match status" value="1"/>
</dbReference>
<dbReference type="Pfam" id="PF00010">
    <property type="entry name" value="HLH"/>
    <property type="match status" value="1"/>
</dbReference>
<dbReference type="SMART" id="SM00353">
    <property type="entry name" value="HLH"/>
    <property type="match status" value="1"/>
</dbReference>
<dbReference type="SUPFAM" id="SSF47459">
    <property type="entry name" value="HLH, helix-loop-helix DNA-binding domain"/>
    <property type="match status" value="1"/>
</dbReference>
<dbReference type="PROSITE" id="PS50888">
    <property type="entry name" value="BHLH"/>
    <property type="match status" value="1"/>
</dbReference>
<sequence>MNGTTSSINFLTSDDDASAAAMEAFIGTNHHSSLFPPPPQQPPQPQFNEDTLQQRLQALIESAGENWTYAIFWQISHDFDSSTGDNTVILGWGDGYYKGEEDKEKKKNNTNTAEQEHRKRVIRELNSLISGGIGVSDESNDEEVTDTEWFFLVSMTQSFVNGVGLPGESFLNSRVIWLSGSGALTGSGCERAGQGQIYGLKTMVCIATQNGVVELGSSEVISQSSDLMHKVNNLFNFNNGGGNNGVEASSWGFNLNPDQGENDPALWISEPTNTGIESPARVNNGNNSNSNSKSDSHQISKLEKNDISSVENQNRQSSCLVEKDLTFQGGLLKSNETLSFCGNESSKKRTSVSKGSNNDEGMLSFSTVVRSAANDSDHSDLEASVVKEAIVVEPPEKKPRKRGRKPANGREEPLNHVEAERQRREKLNQRFYSLRAVVPNVSKMDKASLLGDAISYINELKSKLQQAESDKEEIQKKLDGMSKEGNNGKGCGSRAKERKSSNQDSTASSIEMEIDVKIIGWDVMIRVQCGKKDHPGARFMEALKELDLEVNHASLSVVNDLMIQQATVKMGSQFFNHDQLKVALMTKVGENY</sequence>
<comment type="function">
    <text evidence="3 6 7 8 9">Transcription factor involved in tryptophan, jasmonic acid (JA) and other stress-responsive gene regulation. With MYC2 and MYC4, controls additively subsets of JA-dependent responses. Can form complexes with all known glucosinolate-related MYBs to regulate glucosinolate biosynthesis. Binds to the G-box (5'-CACGTG-3') of promoters. Activates multiple TIFY/JAZ promoters.</text>
</comment>
<comment type="subunit">
    <text evidence="5 6 7 8 9">Homo- and heterodimer. Interacts with MYB28, MYB29, MYB34, MYB51, MYB76, MYB122, MYC2, MYC4, AFPH2/NINJA and the JAZ repressors TIFY10A/JAZ1, TIFY10B/JAZ2, TIFY6B/JAZ3, TIFY11A/JAZ5, TIFY11B/JAZ6, TIFY5B/JAZ7, TIFY5A/JAZ8, TIFY7/JAZ9, TIFY9/JAZ10, TIFY3A/JAZ11 and TIFY3B/JAZ12.</text>
</comment>
<comment type="interaction">
    <interactant intactId="EBI-15845995">
        <id>Q9FIP9</id>
    </interactant>
    <interactant intactId="EBI-15924435">
        <id>Q7XYY2-1</id>
        <label>MED25</label>
    </interactant>
    <organismsDiffer>false</organismsDiffer>
    <experiments>2</experiments>
</comment>
<comment type="interaction">
    <interactant intactId="EBI-15845995">
        <id>Q9FIP9</id>
    </interactant>
    <interactant intactId="EBI-1388539">
        <id>Q9LMA8</id>
        <label>TIFY10A</label>
    </interactant>
    <organismsDiffer>false</organismsDiffer>
    <experiments>3</experiments>
</comment>
<comment type="interaction">
    <interactant intactId="EBI-15845995">
        <id>Q9FIP9</id>
    </interactant>
    <interactant intactId="EBI-2312231">
        <id>Q9C5K8</id>
        <label>TIFY3B</label>
    </interactant>
    <organismsDiffer>false</organismsDiffer>
    <experiments>2</experiments>
</comment>
<comment type="interaction">
    <interactant intactId="EBI-15845995">
        <id>Q9FIP9</id>
    </interactant>
    <interactant intactId="EBI-2312143">
        <id>Q8LBM2</id>
        <label>TIFY5A</label>
    </interactant>
    <organismsDiffer>false</organismsDiffer>
    <experiments>2</experiments>
</comment>
<comment type="interaction">
    <interactant intactId="EBI-15845995">
        <id>Q9FIP9</id>
    </interactant>
    <interactant intactId="EBI-1792583">
        <id>Q8W4J8</id>
        <label>TIFY7</label>
    </interactant>
    <organismsDiffer>false</organismsDiffer>
    <experiments>5</experiments>
</comment>
<comment type="subcellular location">
    <subcellularLocation>
        <location evidence="1 6 7 8">Nucleus</location>
    </subcellularLocation>
</comment>
<comment type="tissue specificity">
    <text evidence="3 4 8">Constitutively expressed in roots, stems, leaves, flowers, and seedlings.</text>
</comment>
<comment type="induction">
    <text evidence="6 8">Barely up-regulated by jasmonic acid.</text>
</comment>
<comment type="domain">
    <text evidence="6 8 9">The JAZ-interaction domain (JID) (82-141) is sufficient for interaction with MYB proteins and most of the TIFY/JAZ proteins (PubMed:21335373, PubMed:23943862).</text>
</comment>
<comment type="disruption phenotype">
    <text evidence="7 8 9">Minor effect on jasmonic acid response and no effect on glucosinolate biosynthesis. Myc2 and myc3 double mutant has an increased insensitivity to jasmonic acid. Myc2, myc3 and myc4 triple mutant has no jasmonate-related defense response, is devoid of glucosinolates and is extremely susceptible to generalist herbivores.</text>
</comment>
<evidence type="ECO:0000255" key="1">
    <source>
        <dbReference type="PROSITE-ProRule" id="PRU00981"/>
    </source>
</evidence>
<evidence type="ECO:0000256" key="2">
    <source>
        <dbReference type="SAM" id="MobiDB-lite"/>
    </source>
</evidence>
<evidence type="ECO:0000269" key="3">
    <source>
    </source>
</evidence>
<evidence type="ECO:0000269" key="4">
    <source>
    </source>
</evidence>
<evidence type="ECO:0000269" key="5">
    <source>
    </source>
</evidence>
<evidence type="ECO:0000269" key="6">
    <source>
    </source>
</evidence>
<evidence type="ECO:0000269" key="7">
    <source>
    </source>
</evidence>
<evidence type="ECO:0000269" key="8">
    <source>
    </source>
</evidence>
<evidence type="ECO:0000269" key="9">
    <source>
    </source>
</evidence>
<evidence type="ECO:0000305" key="10"/>
<evidence type="ECO:0007829" key="11">
    <source>
        <dbReference type="PDB" id="4RRU"/>
    </source>
</evidence>
<evidence type="ECO:0007829" key="12">
    <source>
        <dbReference type="PDB" id="4RS9"/>
    </source>
</evidence>
<evidence type="ECO:0007829" key="13">
    <source>
        <dbReference type="PDB" id="7FDM"/>
    </source>
</evidence>
<proteinExistence type="evidence at protein level"/>
<reference key="1">
    <citation type="journal article" date="2003" name="Mol. Biol. Evol.">
        <title>The basic helix-loop-helix transcription factor family in plants: a genome-wide study of protein structure and functional diversity.</title>
        <authorList>
            <person name="Heim M.A."/>
            <person name="Jakoby M."/>
            <person name="Werber M."/>
            <person name="Martin C."/>
            <person name="Weisshaar B."/>
            <person name="Bailey P.C."/>
        </authorList>
    </citation>
    <scope>NUCLEOTIDE SEQUENCE [MRNA]</scope>
    <scope>TISSUE SPECIFICITY</scope>
    <scope>GENE FAMILY</scope>
    <scope>NOMENCLATURE</scope>
    <source>
        <strain>cv. Columbia</strain>
    </source>
</reference>
<reference key="2">
    <citation type="journal article" date="1998" name="DNA Res.">
        <title>Structural analysis of Arabidopsis thaliana chromosome 5. VIII. Sequence features of the regions of 1,081,958 bp covered by seventeen physically assigned P1 and TAC clones.</title>
        <authorList>
            <person name="Asamizu E."/>
            <person name="Sato S."/>
            <person name="Kaneko T."/>
            <person name="Nakamura Y."/>
            <person name="Kotani H."/>
            <person name="Miyajima N."/>
            <person name="Tabata S."/>
        </authorList>
    </citation>
    <scope>NUCLEOTIDE SEQUENCE [LARGE SCALE GENOMIC DNA]</scope>
    <source>
        <strain>cv. Columbia</strain>
    </source>
</reference>
<reference key="3">
    <citation type="journal article" date="2017" name="Plant J.">
        <title>Araport11: a complete reannotation of the Arabidopsis thaliana reference genome.</title>
        <authorList>
            <person name="Cheng C.Y."/>
            <person name="Krishnakumar V."/>
            <person name="Chan A.P."/>
            <person name="Thibaud-Nissen F."/>
            <person name="Schobel S."/>
            <person name="Town C.D."/>
        </authorList>
    </citation>
    <scope>GENOME REANNOTATION</scope>
    <source>
        <strain>cv. Columbia</strain>
    </source>
</reference>
<reference key="4">
    <citation type="journal article" date="2002" name="Genetics">
        <title>Dominant alleles of the basic helix-loop-helix transcription factor ATR2 activate stress-responsive genes in Arabidopsis.</title>
        <authorList>
            <person name="Smolen G.A."/>
            <person name="Pawlowski L."/>
            <person name="Wilensky S.E."/>
            <person name="Bender J."/>
        </authorList>
    </citation>
    <scope>FUNCTION</scope>
    <scope>MUTAGENESIS OF ASP-94</scope>
    <scope>TISSUE SPECIFICITY</scope>
</reference>
<reference key="5">
    <citation type="journal article" date="2003" name="Plant Cell">
        <title>The Arabidopsis basic/helix-loop-helix transcription factor family.</title>
        <authorList>
            <person name="Toledo-Ortiz G."/>
            <person name="Huq E."/>
            <person name="Quail P.H."/>
        </authorList>
    </citation>
    <scope>GENE FAMILY</scope>
</reference>
<reference key="6">
    <citation type="journal article" date="2003" name="Plant Cell">
        <title>Update on the basic helix-loop-helix transcription factor gene family in Arabidopsis thaliana.</title>
        <authorList>
            <person name="Bailey P.C."/>
            <person name="Martin C."/>
            <person name="Toledo-Ortiz G."/>
            <person name="Quail P.H."/>
            <person name="Huq E."/>
            <person name="Heim M.A."/>
            <person name="Jakoby M."/>
            <person name="Werber M."/>
            <person name="Weisshaar B."/>
        </authorList>
    </citation>
    <scope>GENE FAMILY</scope>
    <scope>NOMENCLATURE</scope>
</reference>
<reference key="7">
    <citation type="journal article" date="2010" name="Nature">
        <title>NINJA connects the co-repressor TOPLESS to jasmonate signalling.</title>
        <authorList>
            <person name="Pauwels L."/>
            <person name="Barbero G.F."/>
            <person name="Geerinck J."/>
            <person name="Tilleman S."/>
            <person name="Grunewald W."/>
            <person name="Perez A.C."/>
            <person name="Chico J.M."/>
            <person name="Bossche R.V."/>
            <person name="Sewell J."/>
            <person name="Gil E."/>
            <person name="Garcia-Casado G."/>
            <person name="Witters E."/>
            <person name="Inze D."/>
            <person name="Long J.A."/>
            <person name="De Jaeger G."/>
            <person name="Solano R."/>
            <person name="Goossens A."/>
        </authorList>
    </citation>
    <scope>INTERACTION WITH TIFY10A/JAZ1</scope>
</reference>
<reference key="8">
    <citation type="journal article" date="2011" name="J. Exp. Bot.">
        <title>Characterization of JAZ-interacting bHLH transcription factors that regulate jasmonate responses in Arabidopsis.</title>
        <authorList>
            <person name="Niu Y."/>
            <person name="Figueroa P."/>
            <person name="Browse J."/>
        </authorList>
    </citation>
    <scope>FUNCTION</scope>
    <scope>INTERACTION WITH TIFY10A/JAZ1; TIFY6B/JAZ3 AND TIFY7/JAZ9</scope>
    <scope>SUBCELLULAR LOCATION</scope>
    <scope>DISRUPTION PHENOTYPE</scope>
</reference>
<reference key="9">
    <citation type="journal article" date="2011" name="Mol. Plant">
        <title>The bHLH transcription factor MYC3 interacts with the Jasmonate ZIM-domain proteins to mediate jasmonate response in Arabidopsis.</title>
        <authorList>
            <person name="Cheng Z."/>
            <person name="Sun L."/>
            <person name="Qi T."/>
            <person name="Zhang B."/>
            <person name="Peng W."/>
            <person name="Liu Y."/>
            <person name="Xie D."/>
        </authorList>
    </citation>
    <scope>FUNCTION</scope>
    <scope>INTERACTION WITH TIFY10A/JAZ1; TIFY10B/JAZ2; TIFY11A/JAZ5; TIFY11B/JAZ6; TIFY5A/JAZ8; TIFY7/JAZ9; TIFY9/JAZ10 AND TIFY3A/JAZ11</scope>
    <scope>DOMAIN</scope>
    <scope>SUBCELLULAR LOCATION</scope>
    <scope>INDUCTION BY JASMONIC ACID</scope>
</reference>
<reference key="10">
    <citation type="journal article" date="2011" name="Plant Cell">
        <title>The Arabidopsis bHLH transcription factors MYC3 and MYC4 are targets of JAZ repressors and act additively with MYC2 in the activation of jasmonate responses.</title>
        <authorList>
            <person name="Fernandez-Calvo P."/>
            <person name="Chini A."/>
            <person name="Fernandez-Barbero G."/>
            <person name="Chico J.M."/>
            <person name="Gimenez-Ibanez S."/>
            <person name="Geerinck J."/>
            <person name="Eeckhout D."/>
            <person name="Schweizer F."/>
            <person name="Godoy M."/>
            <person name="Franco-Zorrilla J.M."/>
            <person name="Pauwels L."/>
            <person name="Witters E."/>
            <person name="Puga M.I."/>
            <person name="Paz-Ares J."/>
            <person name="Goossens A."/>
            <person name="Reymond P."/>
            <person name="De Jaeger G."/>
            <person name="Solano R."/>
        </authorList>
    </citation>
    <scope>FUNCTION</scope>
    <scope>INTERACTION WITH TIFY10A/JAZ1; TIFY10B/JAZ2; TIFY6B/JAZ3; TIFY11A/JAZ5; TIFY11B/JAZ6; TIFY5B/JAZ7; TIFY5A/JAZ8; TIFY7/JAZ9; TIFY9/JAZ10; TIFY3A/JAZ11; TIFY3B/JAZ12; MYC2; MYC4 AND AFPH2/NINJA</scope>
    <scope>SUBUNIT</scope>
    <scope>DOMAIN</scope>
    <scope>SUBCELLULAR LOCATION</scope>
    <scope>TISSUE SPECIFICITY</scope>
    <scope>INDUCTION BY JASMONIC ACID</scope>
    <scope>DISRUPTION PHENOTYPE</scope>
</reference>
<reference key="11">
    <citation type="journal article" date="2013" name="Plant Cell">
        <title>Arabidopsis basic helix-loop-helix transcription factors MYC2, MYC3, and MYC4 regulate glucosinolate biosynthesis, insect performance, and feeding behavior.</title>
        <authorList>
            <person name="Schweizer F."/>
            <person name="Fernandez-Calvo P."/>
            <person name="Zander M."/>
            <person name="Diez-Diaz M."/>
            <person name="Fonseca S."/>
            <person name="Glauser G."/>
            <person name="Lewsey M.G."/>
            <person name="Ecker J.R."/>
            <person name="Solano R."/>
            <person name="Reymond P."/>
        </authorList>
    </citation>
    <scope>FUNCTION</scope>
    <scope>DISRUPTION PHENOTYPE</scope>
    <scope>DOMAIN</scope>
    <scope>INTERACTION WITH MYB28; MYB29; MYB34; MYB51; MYB76 AND MYB122</scope>
</reference>
<name>MYC3_ARATH</name>
<gene>
    <name type="primary">MYC3</name>
    <name type="synonym">ATR2</name>
    <name type="synonym">BHLH5</name>
    <name type="synonym">EN36</name>
    <name type="ordered locus">At5g46760</name>
    <name type="ORF">MZA15.18</name>
</gene>
<accession>Q9FIP9</accession>
<accession>Q8W2F5</accession>
<protein>
    <recommendedName>
        <fullName>Transcription factor MYC3</fullName>
    </recommendedName>
    <alternativeName>
        <fullName>Basic helix-loop-helix protein 5</fullName>
        <shortName>AtbHLH5</shortName>
        <shortName>bHLH 5</shortName>
    </alternativeName>
    <alternativeName>
        <fullName>Protein ALTERED TRYPTOPHAN REGULATION 2</fullName>
    </alternativeName>
    <alternativeName>
        <fullName>Transcription factor ATR2</fullName>
    </alternativeName>
    <alternativeName>
        <fullName>Transcription factor EN 36</fullName>
    </alternativeName>
    <alternativeName>
        <fullName>bHLH transcription factor bHLH005</fullName>
    </alternativeName>
</protein>
<keyword id="KW-0002">3D-structure</keyword>
<keyword id="KW-0238">DNA-binding</keyword>
<keyword id="KW-0539">Nucleus</keyword>
<keyword id="KW-0611">Plant defense</keyword>
<keyword id="KW-1185">Reference proteome</keyword>
<keyword id="KW-0804">Transcription</keyword>
<keyword id="KW-0805">Transcription regulation</keyword>
<organism>
    <name type="scientific">Arabidopsis thaliana</name>
    <name type="common">Mouse-ear cress</name>
    <dbReference type="NCBI Taxonomy" id="3702"/>
    <lineage>
        <taxon>Eukaryota</taxon>
        <taxon>Viridiplantae</taxon>
        <taxon>Streptophyta</taxon>
        <taxon>Embryophyta</taxon>
        <taxon>Tracheophyta</taxon>
        <taxon>Spermatophyta</taxon>
        <taxon>Magnoliopsida</taxon>
        <taxon>eudicotyledons</taxon>
        <taxon>Gunneridae</taxon>
        <taxon>Pentapetalae</taxon>
        <taxon>rosids</taxon>
        <taxon>malvids</taxon>
        <taxon>Brassicales</taxon>
        <taxon>Brassicaceae</taxon>
        <taxon>Camelineae</taxon>
        <taxon>Arabidopsis</taxon>
    </lineage>
</organism>